<evidence type="ECO:0000255" key="1">
    <source>
        <dbReference type="HAMAP-Rule" id="MF_01351"/>
    </source>
</evidence>
<dbReference type="EC" id="7.1.1.-" evidence="1"/>
<dbReference type="EMBL" id="AE016958">
    <property type="protein sequence ID" value="AAS02412.1"/>
    <property type="molecule type" value="Genomic_DNA"/>
</dbReference>
<dbReference type="SMR" id="Q744Z4"/>
<dbReference type="STRING" id="262316.MAP_0095c"/>
<dbReference type="KEGG" id="mpa:MAP_0095c"/>
<dbReference type="eggNOG" id="COG1143">
    <property type="taxonomic scope" value="Bacteria"/>
</dbReference>
<dbReference type="HOGENOM" id="CLU_067218_4_0_11"/>
<dbReference type="Proteomes" id="UP000000580">
    <property type="component" value="Chromosome"/>
</dbReference>
<dbReference type="GO" id="GO:0005886">
    <property type="term" value="C:plasma membrane"/>
    <property type="evidence" value="ECO:0007669"/>
    <property type="project" value="UniProtKB-SubCell"/>
</dbReference>
<dbReference type="GO" id="GO:0051539">
    <property type="term" value="F:4 iron, 4 sulfur cluster binding"/>
    <property type="evidence" value="ECO:0007669"/>
    <property type="project" value="UniProtKB-KW"/>
</dbReference>
<dbReference type="GO" id="GO:0005506">
    <property type="term" value="F:iron ion binding"/>
    <property type="evidence" value="ECO:0007669"/>
    <property type="project" value="UniProtKB-UniRule"/>
</dbReference>
<dbReference type="GO" id="GO:0050136">
    <property type="term" value="F:NADH:ubiquinone reductase (non-electrogenic) activity"/>
    <property type="evidence" value="ECO:0007669"/>
    <property type="project" value="UniProtKB-UniRule"/>
</dbReference>
<dbReference type="GO" id="GO:0048038">
    <property type="term" value="F:quinone binding"/>
    <property type="evidence" value="ECO:0007669"/>
    <property type="project" value="UniProtKB-KW"/>
</dbReference>
<dbReference type="GO" id="GO:0009060">
    <property type="term" value="P:aerobic respiration"/>
    <property type="evidence" value="ECO:0007669"/>
    <property type="project" value="TreeGrafter"/>
</dbReference>
<dbReference type="FunFam" id="3.30.70.3270:FF:000007">
    <property type="entry name" value="NADH-quinone oxidoreductase subunit I"/>
    <property type="match status" value="1"/>
</dbReference>
<dbReference type="Gene3D" id="3.30.70.3270">
    <property type="match status" value="1"/>
</dbReference>
<dbReference type="HAMAP" id="MF_01351">
    <property type="entry name" value="NDH1_NuoI"/>
    <property type="match status" value="1"/>
</dbReference>
<dbReference type="InterPro" id="IPR017896">
    <property type="entry name" value="4Fe4S_Fe-S-bd"/>
</dbReference>
<dbReference type="InterPro" id="IPR017900">
    <property type="entry name" value="4Fe4S_Fe_S_CS"/>
</dbReference>
<dbReference type="InterPro" id="IPR010226">
    <property type="entry name" value="NADH_quinone_OxRdtase_chainI"/>
</dbReference>
<dbReference type="NCBIfam" id="TIGR01971">
    <property type="entry name" value="NuoI"/>
    <property type="match status" value="1"/>
</dbReference>
<dbReference type="NCBIfam" id="NF004537">
    <property type="entry name" value="PRK05888.1-3"/>
    <property type="match status" value="1"/>
</dbReference>
<dbReference type="PANTHER" id="PTHR10849:SF20">
    <property type="entry name" value="NADH DEHYDROGENASE [UBIQUINONE] IRON-SULFUR PROTEIN 8, MITOCHONDRIAL"/>
    <property type="match status" value="1"/>
</dbReference>
<dbReference type="PANTHER" id="PTHR10849">
    <property type="entry name" value="NADH DEHYDROGENASE UBIQUINONE IRON-SULFUR PROTEIN 8, MITOCHONDRIAL"/>
    <property type="match status" value="1"/>
</dbReference>
<dbReference type="Pfam" id="PF12838">
    <property type="entry name" value="Fer4_7"/>
    <property type="match status" value="1"/>
</dbReference>
<dbReference type="SUPFAM" id="SSF54862">
    <property type="entry name" value="4Fe-4S ferredoxins"/>
    <property type="match status" value="1"/>
</dbReference>
<dbReference type="PROSITE" id="PS00198">
    <property type="entry name" value="4FE4S_FER_1"/>
    <property type="match status" value="2"/>
</dbReference>
<dbReference type="PROSITE" id="PS51379">
    <property type="entry name" value="4FE4S_FER_2"/>
    <property type="match status" value="2"/>
</dbReference>
<reference key="1">
    <citation type="journal article" date="2005" name="Proc. Natl. Acad. Sci. U.S.A.">
        <title>The complete genome sequence of Mycobacterium avium subspecies paratuberculosis.</title>
        <authorList>
            <person name="Li L."/>
            <person name="Bannantine J.P."/>
            <person name="Zhang Q."/>
            <person name="Amonsin A."/>
            <person name="May B.J."/>
            <person name="Alt D."/>
            <person name="Banerji N."/>
            <person name="Kanjilal S."/>
            <person name="Kapur V."/>
        </authorList>
    </citation>
    <scope>NUCLEOTIDE SEQUENCE [LARGE SCALE GENOMIC DNA]</scope>
    <source>
        <strain>ATCC BAA-968 / K-10</strain>
    </source>
</reference>
<proteinExistence type="inferred from homology"/>
<protein>
    <recommendedName>
        <fullName evidence="1">NADH-quinone oxidoreductase subunit I 1</fullName>
        <ecNumber evidence="1">7.1.1.-</ecNumber>
    </recommendedName>
    <alternativeName>
        <fullName evidence="1">NADH dehydrogenase I subunit I 1</fullName>
    </alternativeName>
    <alternativeName>
        <fullName evidence="1">NDH-1 subunit I 1</fullName>
    </alternativeName>
</protein>
<sequence length="175" mass="19603">MFTFLKLIAGFRVTFSAMFKKPVTEGYPEKPGPVAPRYHGRHQLNRWPDGLEKCIGCELCAWACPADAIFVESADNTEAERFSPGERYGRVYQINYLRCIGCGFCIEACPTRALTMINDYEMADDNRADLIYGKDQLLAPLQPGMAAPPHPMAPGSTERDYYLLDNIAAANREAR</sequence>
<gene>
    <name evidence="1" type="primary">nuoI1</name>
    <name type="ordered locus">MAP_0095c</name>
</gene>
<keyword id="KW-0004">4Fe-4S</keyword>
<keyword id="KW-1003">Cell membrane</keyword>
<keyword id="KW-0408">Iron</keyword>
<keyword id="KW-0411">Iron-sulfur</keyword>
<keyword id="KW-0472">Membrane</keyword>
<keyword id="KW-0479">Metal-binding</keyword>
<keyword id="KW-0520">NAD</keyword>
<keyword id="KW-0874">Quinone</keyword>
<keyword id="KW-1185">Reference proteome</keyword>
<keyword id="KW-0677">Repeat</keyword>
<keyword id="KW-1278">Translocase</keyword>
<name>NUOI1_MYCPA</name>
<organism>
    <name type="scientific">Mycolicibacterium paratuberculosis (strain ATCC BAA-968 / K-10)</name>
    <name type="common">Mycobacterium paratuberculosis</name>
    <dbReference type="NCBI Taxonomy" id="262316"/>
    <lineage>
        <taxon>Bacteria</taxon>
        <taxon>Bacillati</taxon>
        <taxon>Actinomycetota</taxon>
        <taxon>Actinomycetes</taxon>
        <taxon>Mycobacteriales</taxon>
        <taxon>Mycobacteriaceae</taxon>
        <taxon>Mycobacterium</taxon>
        <taxon>Mycobacterium avium complex (MAC)</taxon>
    </lineage>
</organism>
<accession>Q744Z4</accession>
<comment type="function">
    <text evidence="1">NDH-1 shuttles electrons from NADH, via FMN and iron-sulfur (Fe-S) centers, to quinones in the respiratory chain. The immediate electron acceptor for the enzyme in this species is believed to be menaquinone. Couples the redox reaction to proton translocation (for every two electrons transferred, four hydrogen ions are translocated across the cytoplasmic membrane), and thus conserves the redox energy in a proton gradient.</text>
</comment>
<comment type="catalytic activity">
    <reaction evidence="1">
        <text>a quinone + NADH + 5 H(+)(in) = a quinol + NAD(+) + 4 H(+)(out)</text>
        <dbReference type="Rhea" id="RHEA:57888"/>
        <dbReference type="ChEBI" id="CHEBI:15378"/>
        <dbReference type="ChEBI" id="CHEBI:24646"/>
        <dbReference type="ChEBI" id="CHEBI:57540"/>
        <dbReference type="ChEBI" id="CHEBI:57945"/>
        <dbReference type="ChEBI" id="CHEBI:132124"/>
    </reaction>
</comment>
<comment type="cofactor">
    <cofactor evidence="1">
        <name>[4Fe-4S] cluster</name>
        <dbReference type="ChEBI" id="CHEBI:49883"/>
    </cofactor>
    <text evidence="1">Binds 2 [4Fe-4S] clusters per subunit.</text>
</comment>
<comment type="subunit">
    <text evidence="1">NDH-1 is composed of 14 different subunits. Subunits NuoA, H, J, K, L, M, N constitute the membrane sector of the complex.</text>
</comment>
<comment type="subcellular location">
    <subcellularLocation>
        <location evidence="1">Cell membrane</location>
        <topology evidence="1">Peripheral membrane protein</topology>
    </subcellularLocation>
</comment>
<comment type="similarity">
    <text evidence="1">Belongs to the complex I 23 kDa subunit family.</text>
</comment>
<feature type="chain" id="PRO_0000245718" description="NADH-quinone oxidoreductase subunit I 1">
    <location>
        <begin position="1"/>
        <end position="175"/>
    </location>
</feature>
<feature type="domain" description="4Fe-4S ferredoxin-type 1" evidence="1">
    <location>
        <begin position="44"/>
        <end position="74"/>
    </location>
</feature>
<feature type="domain" description="4Fe-4S ferredoxin-type 2" evidence="1">
    <location>
        <begin position="90"/>
        <end position="119"/>
    </location>
</feature>
<feature type="binding site" evidence="1">
    <location>
        <position position="54"/>
    </location>
    <ligand>
        <name>[4Fe-4S] cluster</name>
        <dbReference type="ChEBI" id="CHEBI:49883"/>
        <label>1</label>
    </ligand>
</feature>
<feature type="binding site" evidence="1">
    <location>
        <position position="57"/>
    </location>
    <ligand>
        <name>[4Fe-4S] cluster</name>
        <dbReference type="ChEBI" id="CHEBI:49883"/>
        <label>1</label>
    </ligand>
</feature>
<feature type="binding site" evidence="1">
    <location>
        <position position="60"/>
    </location>
    <ligand>
        <name>[4Fe-4S] cluster</name>
        <dbReference type="ChEBI" id="CHEBI:49883"/>
        <label>1</label>
    </ligand>
</feature>
<feature type="binding site" evidence="1">
    <location>
        <position position="64"/>
    </location>
    <ligand>
        <name>[4Fe-4S] cluster</name>
        <dbReference type="ChEBI" id="CHEBI:49883"/>
        <label>2</label>
    </ligand>
</feature>
<feature type="binding site" evidence="1">
    <location>
        <position position="99"/>
    </location>
    <ligand>
        <name>[4Fe-4S] cluster</name>
        <dbReference type="ChEBI" id="CHEBI:49883"/>
        <label>2</label>
    </ligand>
</feature>
<feature type="binding site" evidence="1">
    <location>
        <position position="102"/>
    </location>
    <ligand>
        <name>[4Fe-4S] cluster</name>
        <dbReference type="ChEBI" id="CHEBI:49883"/>
        <label>2</label>
    </ligand>
</feature>
<feature type="binding site" evidence="1">
    <location>
        <position position="105"/>
    </location>
    <ligand>
        <name>[4Fe-4S] cluster</name>
        <dbReference type="ChEBI" id="CHEBI:49883"/>
        <label>2</label>
    </ligand>
</feature>
<feature type="binding site" evidence="1">
    <location>
        <position position="109"/>
    </location>
    <ligand>
        <name>[4Fe-4S] cluster</name>
        <dbReference type="ChEBI" id="CHEBI:49883"/>
        <label>1</label>
    </ligand>
</feature>